<organism>
    <name type="scientific">Bos taurus</name>
    <name type="common">Bovine</name>
    <dbReference type="NCBI Taxonomy" id="9913"/>
    <lineage>
        <taxon>Eukaryota</taxon>
        <taxon>Metazoa</taxon>
        <taxon>Chordata</taxon>
        <taxon>Craniata</taxon>
        <taxon>Vertebrata</taxon>
        <taxon>Euteleostomi</taxon>
        <taxon>Mammalia</taxon>
        <taxon>Eutheria</taxon>
        <taxon>Laurasiatheria</taxon>
        <taxon>Artiodactyla</taxon>
        <taxon>Ruminantia</taxon>
        <taxon>Pecora</taxon>
        <taxon>Bovidae</taxon>
        <taxon>Bovinae</taxon>
        <taxon>Bos</taxon>
    </lineage>
</organism>
<dbReference type="EC" id="3.2.1.-"/>
<dbReference type="EMBL" id="M95771">
    <property type="protein sequence ID" value="AAA30444.1"/>
    <property type="molecule type" value="Genomic_DNA"/>
</dbReference>
<dbReference type="EMBL" id="M95770">
    <property type="protein sequence ID" value="AAA30444.1"/>
    <property type="status" value="JOINED"/>
    <property type="molecule type" value="Genomic_DNA"/>
</dbReference>
<dbReference type="EMBL" id="M95769">
    <property type="protein sequence ID" value="AAA30444.1"/>
    <property type="status" value="JOINED"/>
    <property type="molecule type" value="Genomic_DNA"/>
</dbReference>
<dbReference type="PIR" id="B44102">
    <property type="entry name" value="B44102"/>
</dbReference>
<dbReference type="SMR" id="Q01458"/>
<dbReference type="STRING" id="9913.ENSBTAP00000007603"/>
<dbReference type="CAZy" id="GH18">
    <property type="family name" value="Glycoside Hydrolase Family 18"/>
</dbReference>
<dbReference type="GlyCosmos" id="Q01458">
    <property type="glycosylation" value="1 site, No reported glycans"/>
</dbReference>
<dbReference type="GlyGen" id="Q01458">
    <property type="glycosylation" value="1 site"/>
</dbReference>
<dbReference type="PaxDb" id="9913-ENSBTAP00000007603"/>
<dbReference type="eggNOG" id="KOG2806">
    <property type="taxonomic scope" value="Eukaryota"/>
</dbReference>
<dbReference type="InParanoid" id="Q01458"/>
<dbReference type="OrthoDB" id="73875at2759"/>
<dbReference type="Proteomes" id="UP000009136">
    <property type="component" value="Unplaced"/>
</dbReference>
<dbReference type="GO" id="GO:0005764">
    <property type="term" value="C:lysosome"/>
    <property type="evidence" value="ECO:0007669"/>
    <property type="project" value="UniProtKB-SubCell"/>
</dbReference>
<dbReference type="GO" id="GO:0004568">
    <property type="term" value="F:chitinase activity"/>
    <property type="evidence" value="ECO:0000318"/>
    <property type="project" value="GO_Central"/>
</dbReference>
<dbReference type="GO" id="GO:0006032">
    <property type="term" value="P:chitin catabolic process"/>
    <property type="evidence" value="ECO:0000318"/>
    <property type="project" value="GO_Central"/>
</dbReference>
<dbReference type="GO" id="GO:0009313">
    <property type="term" value="P:oligosaccharide catabolic process"/>
    <property type="evidence" value="ECO:0000318"/>
    <property type="project" value="GO_Central"/>
</dbReference>
<dbReference type="InterPro" id="IPR051887">
    <property type="entry name" value="GH18_Domain-Containing"/>
</dbReference>
<dbReference type="InterPro" id="IPR001223">
    <property type="entry name" value="Glyco_hydro18_cat"/>
</dbReference>
<dbReference type="InterPro" id="IPR001579">
    <property type="entry name" value="Glyco_hydro_18_chit_AS"/>
</dbReference>
<dbReference type="InterPro" id="IPR017853">
    <property type="entry name" value="Glycoside_hydrolase_SF"/>
</dbReference>
<dbReference type="PANTHER" id="PTHR46290">
    <property type="entry name" value="DI-N-ACETYLCHITOBIASE"/>
    <property type="match status" value="1"/>
</dbReference>
<dbReference type="PANTHER" id="PTHR46290:SF1">
    <property type="entry name" value="DI-N-ACETYLCHITOBIASE"/>
    <property type="match status" value="1"/>
</dbReference>
<dbReference type="SUPFAM" id="SSF51445">
    <property type="entry name" value="(Trans)glycosidases"/>
    <property type="match status" value="1"/>
</dbReference>
<dbReference type="PROSITE" id="PS01095">
    <property type="entry name" value="GH18_1"/>
    <property type="match status" value="1"/>
</dbReference>
<dbReference type="PROSITE" id="PS51910">
    <property type="entry name" value="GH18_2"/>
    <property type="match status" value="1"/>
</dbReference>
<name>DIAC_BOVIN</name>
<evidence type="ECO:0000250" key="1"/>
<evidence type="ECO:0000255" key="2"/>
<evidence type="ECO:0000255" key="3">
    <source>
        <dbReference type="PROSITE-ProRule" id="PRU01258"/>
    </source>
</evidence>
<evidence type="ECO:0000305" key="4"/>
<comment type="function">
    <text>Involved in the degradation of asparagine-linked glycoproteins. Hydrolyze of N-acetyl-beta-D-glucosamine (1-4)N-acetylglucosamine chitobiose core from the reducing end of the bond, it requires prior cleavage by glycosylasparaginase.</text>
</comment>
<comment type="subcellular location">
    <subcellularLocation>
        <location>Lysosome</location>
    </subcellularLocation>
</comment>
<comment type="similarity">
    <text evidence="4">Belongs to the glycosyl hydrolase 18 family.</text>
</comment>
<accession>Q01458</accession>
<proteinExistence type="inferred from homology"/>
<keyword id="KW-0325">Glycoprotein</keyword>
<keyword id="KW-0326">Glycosidase</keyword>
<keyword id="KW-0378">Hydrolase</keyword>
<keyword id="KW-0458">Lysosome</keyword>
<keyword id="KW-1185">Reference proteome</keyword>
<keyword id="KW-0732">Signal</keyword>
<gene>
    <name type="primary">CTBS</name>
    <name type="synonym">CTB</name>
</gene>
<reference key="1">
    <citation type="journal article" date="1992" name="J. Biol. Chem.">
        <title>Cloning and expression of the cDNA sequence encoding the lysosomal glycosidase di-N-acetylchitobiase.</title>
        <authorList>
            <person name="Fisher K.J."/>
            <person name="Aronson N.N. Jr."/>
        </authorList>
    </citation>
    <scope>NUCLEOTIDE SEQUENCE [GENOMIC DNA]</scope>
</reference>
<feature type="signal peptide" evidence="1">
    <location>
        <begin position="1"/>
        <end position="38"/>
    </location>
</feature>
<feature type="chain" id="PRO_0000011960" description="Di-N-acetylchitobiase">
    <location>
        <begin position="39"/>
        <end position="175" status="greater than"/>
    </location>
</feature>
<feature type="domain" description="GH18" evidence="3">
    <location>
        <begin position="39"/>
        <end position="175" status="greater than"/>
    </location>
</feature>
<feature type="active site" description="Proton donor" evidence="3">
    <location>
        <position position="143"/>
    </location>
</feature>
<feature type="glycosylation site" description="N-linked (GlcNAc...) asparagine" evidence="2">
    <location>
        <position position="115"/>
    </location>
</feature>
<feature type="non-terminal residue">
    <location>
        <position position="175"/>
    </location>
</feature>
<protein>
    <recommendedName>
        <fullName>Di-N-acetylchitobiase</fullName>
        <ecNumber>3.2.1.-</ecNumber>
    </recommendedName>
</protein>
<sequence>MARLQLAGSRRLVPLPRRAPRLAPLLLPLLLALPDGARADCPCKVPALCRPMTHRPDFEVFVFNVGHKTWKYYDWSQITTVVLFLKYDPELMCHAHAKGARVVLKGDVPVKDIINATFRASWIAQQVKLAKTQYMDGINLDIEQDVAHSSPEYYALTALVKETTDSFHHEIKGSQ</sequence>